<comment type="function">
    <text evidence="1">Catalyzes the reversible conversion of 2-phosphoglycerate (2-PG) into phosphoenolpyruvate (PEP). It is essential for the degradation of carbohydrates via glycolysis.</text>
</comment>
<comment type="catalytic activity">
    <reaction evidence="1">
        <text>(2R)-2-phosphoglycerate = phosphoenolpyruvate + H2O</text>
        <dbReference type="Rhea" id="RHEA:10164"/>
        <dbReference type="ChEBI" id="CHEBI:15377"/>
        <dbReference type="ChEBI" id="CHEBI:58289"/>
        <dbReference type="ChEBI" id="CHEBI:58702"/>
        <dbReference type="EC" id="4.2.1.11"/>
    </reaction>
</comment>
<comment type="cofactor">
    <cofactor evidence="1">
        <name>Mg(2+)</name>
        <dbReference type="ChEBI" id="CHEBI:18420"/>
    </cofactor>
    <text evidence="1">Binds a second Mg(2+) ion via substrate during catalysis.</text>
</comment>
<comment type="pathway">
    <text evidence="1">Carbohydrate degradation; glycolysis; pyruvate from D-glyceraldehyde 3-phosphate: step 4/5.</text>
</comment>
<comment type="subcellular location">
    <subcellularLocation>
        <location evidence="1">Cytoplasm</location>
    </subcellularLocation>
    <subcellularLocation>
        <location evidence="1">Secreted</location>
    </subcellularLocation>
    <subcellularLocation>
        <location evidence="1">Cell surface</location>
    </subcellularLocation>
    <text evidence="1">Fractions of enolase are present in both the cytoplasm and on the cell surface.</text>
</comment>
<comment type="similarity">
    <text evidence="1">Belongs to the enolase family.</text>
</comment>
<feature type="chain" id="PRO_1000133025" description="Enolase">
    <location>
        <begin position="1"/>
        <end position="434"/>
    </location>
</feature>
<feature type="active site" description="Proton donor" evidence="1">
    <location>
        <position position="205"/>
    </location>
</feature>
<feature type="active site" description="Proton acceptor" evidence="1">
    <location>
        <position position="343"/>
    </location>
</feature>
<feature type="binding site" evidence="1">
    <location>
        <position position="163"/>
    </location>
    <ligand>
        <name>(2R)-2-phosphoglycerate</name>
        <dbReference type="ChEBI" id="CHEBI:58289"/>
    </ligand>
</feature>
<feature type="binding site" evidence="1">
    <location>
        <position position="242"/>
    </location>
    <ligand>
        <name>Mg(2+)</name>
        <dbReference type="ChEBI" id="CHEBI:18420"/>
    </ligand>
</feature>
<feature type="binding site" evidence="1">
    <location>
        <position position="291"/>
    </location>
    <ligand>
        <name>Mg(2+)</name>
        <dbReference type="ChEBI" id="CHEBI:18420"/>
    </ligand>
</feature>
<feature type="binding site" evidence="1">
    <location>
        <position position="318"/>
    </location>
    <ligand>
        <name>Mg(2+)</name>
        <dbReference type="ChEBI" id="CHEBI:18420"/>
    </ligand>
</feature>
<feature type="binding site" evidence="1">
    <location>
        <position position="343"/>
    </location>
    <ligand>
        <name>(2R)-2-phosphoglycerate</name>
        <dbReference type="ChEBI" id="CHEBI:58289"/>
    </ligand>
</feature>
<feature type="binding site" evidence="1">
    <location>
        <position position="372"/>
    </location>
    <ligand>
        <name>(2R)-2-phosphoglycerate</name>
        <dbReference type="ChEBI" id="CHEBI:58289"/>
    </ligand>
</feature>
<feature type="binding site" evidence="1">
    <location>
        <position position="373"/>
    </location>
    <ligand>
        <name>(2R)-2-phosphoglycerate</name>
        <dbReference type="ChEBI" id="CHEBI:58289"/>
    </ligand>
</feature>
<feature type="binding site" evidence="1">
    <location>
        <position position="394"/>
    </location>
    <ligand>
        <name>(2R)-2-phosphoglycerate</name>
        <dbReference type="ChEBI" id="CHEBI:58289"/>
    </ligand>
</feature>
<evidence type="ECO:0000255" key="1">
    <source>
        <dbReference type="HAMAP-Rule" id="MF_00318"/>
    </source>
</evidence>
<protein>
    <recommendedName>
        <fullName evidence="1">Enolase</fullName>
        <ecNumber evidence="1">4.2.1.11</ecNumber>
    </recommendedName>
    <alternativeName>
        <fullName evidence="1">2-phospho-D-glycerate hydro-lyase</fullName>
    </alternativeName>
    <alternativeName>
        <fullName evidence="1">2-phosphoglycerate dehydratase</fullName>
    </alternativeName>
</protein>
<proteinExistence type="inferred from homology"/>
<reference key="1">
    <citation type="journal article" date="2010" name="Genome Biol.">
        <title>Structure and dynamics of the pan-genome of Streptococcus pneumoniae and closely related species.</title>
        <authorList>
            <person name="Donati C."/>
            <person name="Hiller N.L."/>
            <person name="Tettelin H."/>
            <person name="Muzzi A."/>
            <person name="Croucher N.J."/>
            <person name="Angiuoli S.V."/>
            <person name="Oggioni M."/>
            <person name="Dunning Hotopp J.C."/>
            <person name="Hu F.Z."/>
            <person name="Riley D.R."/>
            <person name="Covacci A."/>
            <person name="Mitchell T.J."/>
            <person name="Bentley S.D."/>
            <person name="Kilian M."/>
            <person name="Ehrlich G.D."/>
            <person name="Rappuoli R."/>
            <person name="Moxon E.R."/>
            <person name="Masignani V."/>
        </authorList>
    </citation>
    <scope>NUCLEOTIDE SEQUENCE [LARGE SCALE GENOMIC DNA]</scope>
    <source>
        <strain>JJA</strain>
    </source>
</reference>
<organism>
    <name type="scientific">Streptococcus pneumoniae (strain JJA)</name>
    <dbReference type="NCBI Taxonomy" id="488222"/>
    <lineage>
        <taxon>Bacteria</taxon>
        <taxon>Bacillati</taxon>
        <taxon>Bacillota</taxon>
        <taxon>Bacilli</taxon>
        <taxon>Lactobacillales</taxon>
        <taxon>Streptococcaceae</taxon>
        <taxon>Streptococcus</taxon>
    </lineage>
</organism>
<gene>
    <name evidence="1" type="primary">eno</name>
    <name type="ordered locus">SPJ_1066</name>
</gene>
<name>ENO_STRZJ</name>
<accession>C1CEB3</accession>
<keyword id="KW-0963">Cytoplasm</keyword>
<keyword id="KW-0324">Glycolysis</keyword>
<keyword id="KW-0456">Lyase</keyword>
<keyword id="KW-0460">Magnesium</keyword>
<keyword id="KW-0479">Metal-binding</keyword>
<keyword id="KW-0964">Secreted</keyword>
<dbReference type="EC" id="4.2.1.11" evidence="1"/>
<dbReference type="EMBL" id="CP000919">
    <property type="protein sequence ID" value="ACO19381.1"/>
    <property type="molecule type" value="Genomic_DNA"/>
</dbReference>
<dbReference type="RefSeq" id="WP_000022813.1">
    <property type="nucleotide sequence ID" value="NC_012466.1"/>
</dbReference>
<dbReference type="SMR" id="C1CEB3"/>
<dbReference type="GeneID" id="93739591"/>
<dbReference type="KEGG" id="sjj:SPJ_1066"/>
<dbReference type="HOGENOM" id="CLU_031223_2_1_9"/>
<dbReference type="UniPathway" id="UPA00109">
    <property type="reaction ID" value="UER00187"/>
</dbReference>
<dbReference type="Proteomes" id="UP000002206">
    <property type="component" value="Chromosome"/>
</dbReference>
<dbReference type="GO" id="GO:0009986">
    <property type="term" value="C:cell surface"/>
    <property type="evidence" value="ECO:0007669"/>
    <property type="project" value="UniProtKB-SubCell"/>
</dbReference>
<dbReference type="GO" id="GO:0005576">
    <property type="term" value="C:extracellular region"/>
    <property type="evidence" value="ECO:0007669"/>
    <property type="project" value="UniProtKB-SubCell"/>
</dbReference>
<dbReference type="GO" id="GO:0009274">
    <property type="term" value="C:peptidoglycan-based cell wall"/>
    <property type="evidence" value="ECO:0007669"/>
    <property type="project" value="UniProtKB-ARBA"/>
</dbReference>
<dbReference type="GO" id="GO:0000015">
    <property type="term" value="C:phosphopyruvate hydratase complex"/>
    <property type="evidence" value="ECO:0007669"/>
    <property type="project" value="InterPro"/>
</dbReference>
<dbReference type="GO" id="GO:0000287">
    <property type="term" value="F:magnesium ion binding"/>
    <property type="evidence" value="ECO:0007669"/>
    <property type="project" value="UniProtKB-UniRule"/>
</dbReference>
<dbReference type="GO" id="GO:0004634">
    <property type="term" value="F:phosphopyruvate hydratase activity"/>
    <property type="evidence" value="ECO:0007669"/>
    <property type="project" value="UniProtKB-UniRule"/>
</dbReference>
<dbReference type="GO" id="GO:0006096">
    <property type="term" value="P:glycolytic process"/>
    <property type="evidence" value="ECO:0007669"/>
    <property type="project" value="UniProtKB-UniRule"/>
</dbReference>
<dbReference type="CDD" id="cd03313">
    <property type="entry name" value="enolase"/>
    <property type="match status" value="1"/>
</dbReference>
<dbReference type="FunFam" id="3.20.20.120:FF:000001">
    <property type="entry name" value="Enolase"/>
    <property type="match status" value="1"/>
</dbReference>
<dbReference type="FunFam" id="3.30.390.10:FF:000001">
    <property type="entry name" value="Enolase"/>
    <property type="match status" value="1"/>
</dbReference>
<dbReference type="Gene3D" id="3.20.20.120">
    <property type="entry name" value="Enolase-like C-terminal domain"/>
    <property type="match status" value="1"/>
</dbReference>
<dbReference type="Gene3D" id="3.30.390.10">
    <property type="entry name" value="Enolase-like, N-terminal domain"/>
    <property type="match status" value="1"/>
</dbReference>
<dbReference type="HAMAP" id="MF_00318">
    <property type="entry name" value="Enolase"/>
    <property type="match status" value="1"/>
</dbReference>
<dbReference type="InterPro" id="IPR000941">
    <property type="entry name" value="Enolase"/>
</dbReference>
<dbReference type="InterPro" id="IPR036849">
    <property type="entry name" value="Enolase-like_C_sf"/>
</dbReference>
<dbReference type="InterPro" id="IPR029017">
    <property type="entry name" value="Enolase-like_N"/>
</dbReference>
<dbReference type="InterPro" id="IPR020810">
    <property type="entry name" value="Enolase_C"/>
</dbReference>
<dbReference type="InterPro" id="IPR020809">
    <property type="entry name" value="Enolase_CS"/>
</dbReference>
<dbReference type="InterPro" id="IPR020811">
    <property type="entry name" value="Enolase_N"/>
</dbReference>
<dbReference type="NCBIfam" id="TIGR01060">
    <property type="entry name" value="eno"/>
    <property type="match status" value="1"/>
</dbReference>
<dbReference type="PANTHER" id="PTHR11902">
    <property type="entry name" value="ENOLASE"/>
    <property type="match status" value="1"/>
</dbReference>
<dbReference type="PANTHER" id="PTHR11902:SF1">
    <property type="entry name" value="ENOLASE"/>
    <property type="match status" value="1"/>
</dbReference>
<dbReference type="Pfam" id="PF00113">
    <property type="entry name" value="Enolase_C"/>
    <property type="match status" value="1"/>
</dbReference>
<dbReference type="Pfam" id="PF03952">
    <property type="entry name" value="Enolase_N"/>
    <property type="match status" value="1"/>
</dbReference>
<dbReference type="PIRSF" id="PIRSF001400">
    <property type="entry name" value="Enolase"/>
    <property type="match status" value="1"/>
</dbReference>
<dbReference type="PRINTS" id="PR00148">
    <property type="entry name" value="ENOLASE"/>
</dbReference>
<dbReference type="SFLD" id="SFLDS00001">
    <property type="entry name" value="Enolase"/>
    <property type="match status" value="1"/>
</dbReference>
<dbReference type="SFLD" id="SFLDF00002">
    <property type="entry name" value="enolase"/>
    <property type="match status" value="1"/>
</dbReference>
<dbReference type="SMART" id="SM01192">
    <property type="entry name" value="Enolase_C"/>
    <property type="match status" value="1"/>
</dbReference>
<dbReference type="SMART" id="SM01193">
    <property type="entry name" value="Enolase_N"/>
    <property type="match status" value="1"/>
</dbReference>
<dbReference type="SUPFAM" id="SSF51604">
    <property type="entry name" value="Enolase C-terminal domain-like"/>
    <property type="match status" value="1"/>
</dbReference>
<dbReference type="SUPFAM" id="SSF54826">
    <property type="entry name" value="Enolase N-terminal domain-like"/>
    <property type="match status" value="1"/>
</dbReference>
<dbReference type="PROSITE" id="PS00164">
    <property type="entry name" value="ENOLASE"/>
    <property type="match status" value="1"/>
</dbReference>
<sequence>MSIITDVYAREVLDSRGNPTLEVEVYTESGAFGRGMVPSGASTGEHEAVELRDGDKSRYGGLGTQKAVDNVNNIIAEAIIGYDVRDQQAIDRAMIALDGTPNKGKLGANAILGVSIAVARAAADYLEIPLYSYLGGFNTKVLPTPMMNIINGGSHSDAPIAFQEFMILPVGAPTFKEALRYGAEIFHALKKILKSRGLETAVGDEGGFAPRFEGTEDGVETILAAIEAAGYVPGKDVFIGFDCASSEFYDKERKVYDYTKFEGEGAAVRTSAEQIDYLEELVNKYPIITIEDGMDENDWDGWKALTERLGKKVQLVGDDFFVTNTDYLARGIQEGAANSILIKVNQIGTLTETFEAIEMAKEAGYTAVVSHRSGETEDSTIADIAVATNAGQIKTGSLSRTDRIAKYNQLLRIEDQLGEVAEYRGLKSFYNLKK</sequence>